<protein>
    <recommendedName>
        <fullName>Endonuclease YncB</fullName>
        <ecNumber evidence="4">3.1.-.-</ecNumber>
    </recommendedName>
</protein>
<name>YNCB_BACSU</name>
<reference key="1">
    <citation type="submission" date="1996-08" db="EMBL/GenBank/DDBJ databases">
        <title>Sequencing of a 26 kb region of the Bacillus subtilis genome downstream of spoVJ.</title>
        <authorList>
            <person name="Borchert S."/>
            <person name="Klein C."/>
            <person name="Piksa B."/>
            <person name="Hammelmann M."/>
            <person name="Entian K.-D."/>
        </authorList>
    </citation>
    <scope>NUCLEOTIDE SEQUENCE [GENOMIC DNA]</scope>
</reference>
<reference key="2">
    <citation type="journal article" date="1997" name="Nature">
        <title>The complete genome sequence of the Gram-positive bacterium Bacillus subtilis.</title>
        <authorList>
            <person name="Kunst F."/>
            <person name="Ogasawara N."/>
            <person name="Moszer I."/>
            <person name="Albertini A.M."/>
            <person name="Alloni G."/>
            <person name="Azevedo V."/>
            <person name="Bertero M.G."/>
            <person name="Bessieres P."/>
            <person name="Bolotin A."/>
            <person name="Borchert S."/>
            <person name="Borriss R."/>
            <person name="Boursier L."/>
            <person name="Brans A."/>
            <person name="Braun M."/>
            <person name="Brignell S.C."/>
            <person name="Bron S."/>
            <person name="Brouillet S."/>
            <person name="Bruschi C.V."/>
            <person name="Caldwell B."/>
            <person name="Capuano V."/>
            <person name="Carter N.M."/>
            <person name="Choi S.-K."/>
            <person name="Codani J.-J."/>
            <person name="Connerton I.F."/>
            <person name="Cummings N.J."/>
            <person name="Daniel R.A."/>
            <person name="Denizot F."/>
            <person name="Devine K.M."/>
            <person name="Duesterhoeft A."/>
            <person name="Ehrlich S.D."/>
            <person name="Emmerson P.T."/>
            <person name="Entian K.-D."/>
            <person name="Errington J."/>
            <person name="Fabret C."/>
            <person name="Ferrari E."/>
            <person name="Foulger D."/>
            <person name="Fritz C."/>
            <person name="Fujita M."/>
            <person name="Fujita Y."/>
            <person name="Fuma S."/>
            <person name="Galizzi A."/>
            <person name="Galleron N."/>
            <person name="Ghim S.-Y."/>
            <person name="Glaser P."/>
            <person name="Goffeau A."/>
            <person name="Golightly E.J."/>
            <person name="Grandi G."/>
            <person name="Guiseppi G."/>
            <person name="Guy B.J."/>
            <person name="Haga K."/>
            <person name="Haiech J."/>
            <person name="Harwood C.R."/>
            <person name="Henaut A."/>
            <person name="Hilbert H."/>
            <person name="Holsappel S."/>
            <person name="Hosono S."/>
            <person name="Hullo M.-F."/>
            <person name="Itaya M."/>
            <person name="Jones L.-M."/>
            <person name="Joris B."/>
            <person name="Karamata D."/>
            <person name="Kasahara Y."/>
            <person name="Klaerr-Blanchard M."/>
            <person name="Klein C."/>
            <person name="Kobayashi Y."/>
            <person name="Koetter P."/>
            <person name="Koningstein G."/>
            <person name="Krogh S."/>
            <person name="Kumano M."/>
            <person name="Kurita K."/>
            <person name="Lapidus A."/>
            <person name="Lardinois S."/>
            <person name="Lauber J."/>
            <person name="Lazarevic V."/>
            <person name="Lee S.-M."/>
            <person name="Levine A."/>
            <person name="Liu H."/>
            <person name="Masuda S."/>
            <person name="Mauel C."/>
            <person name="Medigue C."/>
            <person name="Medina N."/>
            <person name="Mellado R.P."/>
            <person name="Mizuno M."/>
            <person name="Moestl D."/>
            <person name="Nakai S."/>
            <person name="Noback M."/>
            <person name="Noone D."/>
            <person name="O'Reilly M."/>
            <person name="Ogawa K."/>
            <person name="Ogiwara A."/>
            <person name="Oudega B."/>
            <person name="Park S.-H."/>
            <person name="Parro V."/>
            <person name="Pohl T.M."/>
            <person name="Portetelle D."/>
            <person name="Porwollik S."/>
            <person name="Prescott A.M."/>
            <person name="Presecan E."/>
            <person name="Pujic P."/>
            <person name="Purnelle B."/>
            <person name="Rapoport G."/>
            <person name="Rey M."/>
            <person name="Reynolds S."/>
            <person name="Rieger M."/>
            <person name="Rivolta C."/>
            <person name="Rocha E."/>
            <person name="Roche B."/>
            <person name="Rose M."/>
            <person name="Sadaie Y."/>
            <person name="Sato T."/>
            <person name="Scanlan E."/>
            <person name="Schleich S."/>
            <person name="Schroeter R."/>
            <person name="Scoffone F."/>
            <person name="Sekiguchi J."/>
            <person name="Sekowska A."/>
            <person name="Seror S.J."/>
            <person name="Serror P."/>
            <person name="Shin B.-S."/>
            <person name="Soldo B."/>
            <person name="Sorokin A."/>
            <person name="Tacconi E."/>
            <person name="Takagi T."/>
            <person name="Takahashi H."/>
            <person name="Takemaru K."/>
            <person name="Takeuchi M."/>
            <person name="Tamakoshi A."/>
            <person name="Tanaka T."/>
            <person name="Terpstra P."/>
            <person name="Tognoni A."/>
            <person name="Tosato V."/>
            <person name="Uchiyama S."/>
            <person name="Vandenbol M."/>
            <person name="Vannier F."/>
            <person name="Vassarotti A."/>
            <person name="Viari A."/>
            <person name="Wambutt R."/>
            <person name="Wedler E."/>
            <person name="Wedler H."/>
            <person name="Weitzenegger T."/>
            <person name="Winters P."/>
            <person name="Wipat A."/>
            <person name="Yamamoto H."/>
            <person name="Yamane K."/>
            <person name="Yasumoto K."/>
            <person name="Yata K."/>
            <person name="Yoshida K."/>
            <person name="Yoshikawa H.-F."/>
            <person name="Zumstein E."/>
            <person name="Yoshikawa H."/>
            <person name="Danchin A."/>
        </authorList>
    </citation>
    <scope>NUCLEOTIDE SEQUENCE [LARGE SCALE GENOMIC DNA]</scope>
    <source>
        <strain>168</strain>
    </source>
</reference>
<reference key="3">
    <citation type="journal article" date="2001" name="J. Biol. Chem.">
        <title>Purification and characterization of a Bacillus subtilis 168 nuclease, YokF, involved in chromosomal DNA degradation and cell death caused by thermal shock treatments.</title>
        <authorList>
            <person name="Sakamoto J.J."/>
            <person name="Sasaki M."/>
            <person name="Tsuchido T."/>
        </authorList>
    </citation>
    <scope>FUNCTION AS A NUCLEASE</scope>
    <scope>DNASE ACTIVITY</scope>
    <scope>ACTIVITY REGULATION</scope>
    <scope>DISRUPTION PHENOTYPE</scope>
    <source>
        <strain>168</strain>
    </source>
</reference>
<reference key="4">
    <citation type="journal article" date="2002" name="Proc. Natl. Acad. Sci. U.S.A.">
        <title>An expanded view of bacterial DNA replication.</title>
        <authorList>
            <person name="Noirot-Gros M.-F."/>
            <person name="Dervyn E."/>
            <person name="Wu L.J."/>
            <person name="Mervelet P."/>
            <person name="Errington J."/>
            <person name="Ehrlich S.D."/>
            <person name="Noirot P."/>
        </authorList>
    </citation>
    <scope>DISRUPTION PHENOTYPE</scope>
    <source>
        <strain>168</strain>
    </source>
</reference>
<sequence>MKKILISMIAIVLSITLAACGSNHAAKNHSDSNGTEQVSQDTHSNEYNQTEQKAGTPHSKNQKKLVNVTLDRAIDGDTIKVIYNGKKDTVRYLLVDTPETKKPNSCVQPYGEDASKRNKELVNSGKLQLEFDKGDRRDKYGRLLAYVYVDGKSVQETLLKEGLARVAYVYEPNTKYIDQFRLDEQEAKSDKLSIWSKSGYVTNRGFNGCVK</sequence>
<dbReference type="EC" id="3.1.-.-" evidence="4"/>
<dbReference type="EMBL" id="U66480">
    <property type="protein sequence ID" value="AAB41095.1"/>
    <property type="molecule type" value="Genomic_DNA"/>
</dbReference>
<dbReference type="EMBL" id="AL009126">
    <property type="protein sequence ID" value="CAB13646.1"/>
    <property type="molecule type" value="Genomic_DNA"/>
</dbReference>
<dbReference type="PIR" id="D69888">
    <property type="entry name" value="D69888"/>
</dbReference>
<dbReference type="RefSeq" id="NP_389644.1">
    <property type="nucleotide sequence ID" value="NC_000964.3"/>
</dbReference>
<dbReference type="RefSeq" id="WP_003245469.1">
    <property type="nucleotide sequence ID" value="NZ_OZ025638.1"/>
</dbReference>
<dbReference type="SMR" id="P94492"/>
<dbReference type="FunCoup" id="P94492">
    <property type="interactions" value="40"/>
</dbReference>
<dbReference type="IntAct" id="P94492">
    <property type="interactions" value="1"/>
</dbReference>
<dbReference type="STRING" id="224308.BSU17620"/>
<dbReference type="PaxDb" id="224308-BSU17620"/>
<dbReference type="EnsemblBacteria" id="CAB13646">
    <property type="protein sequence ID" value="CAB13646"/>
    <property type="gene ID" value="BSU_17620"/>
</dbReference>
<dbReference type="GeneID" id="939569"/>
<dbReference type="KEGG" id="bsu:BSU17620"/>
<dbReference type="PATRIC" id="fig|224308.179.peg.1913"/>
<dbReference type="eggNOG" id="COG1525">
    <property type="taxonomic scope" value="Bacteria"/>
</dbReference>
<dbReference type="InParanoid" id="P94492"/>
<dbReference type="OrthoDB" id="4376109at2"/>
<dbReference type="PhylomeDB" id="P94492"/>
<dbReference type="BioCyc" id="BSUB:BSU17620-MONOMER"/>
<dbReference type="Proteomes" id="UP000001570">
    <property type="component" value="Chromosome"/>
</dbReference>
<dbReference type="GO" id="GO:0005886">
    <property type="term" value="C:plasma membrane"/>
    <property type="evidence" value="ECO:0007669"/>
    <property type="project" value="UniProtKB-SubCell"/>
</dbReference>
<dbReference type="GO" id="GO:0004519">
    <property type="term" value="F:endonuclease activity"/>
    <property type="evidence" value="ECO:0007669"/>
    <property type="project" value="UniProtKB-KW"/>
</dbReference>
<dbReference type="GO" id="GO:0046872">
    <property type="term" value="F:metal ion binding"/>
    <property type="evidence" value="ECO:0007669"/>
    <property type="project" value="UniProtKB-KW"/>
</dbReference>
<dbReference type="GO" id="GO:0003676">
    <property type="term" value="F:nucleic acid binding"/>
    <property type="evidence" value="ECO:0007669"/>
    <property type="project" value="InterPro"/>
</dbReference>
<dbReference type="CDD" id="cd00175">
    <property type="entry name" value="SNc"/>
    <property type="match status" value="1"/>
</dbReference>
<dbReference type="FunFam" id="2.40.50.90:FF:000025">
    <property type="entry name" value="Thermonuclease"/>
    <property type="match status" value="1"/>
</dbReference>
<dbReference type="Gene3D" id="2.40.50.90">
    <property type="match status" value="1"/>
</dbReference>
<dbReference type="InterPro" id="IPR035437">
    <property type="entry name" value="SNase_OB-fold_sf"/>
</dbReference>
<dbReference type="InterPro" id="IPR016071">
    <property type="entry name" value="Staphylococal_nuclease_OB-fold"/>
</dbReference>
<dbReference type="InterPro" id="IPR002071">
    <property type="entry name" value="Thermonucl_AS"/>
</dbReference>
<dbReference type="PANTHER" id="PTHR12302">
    <property type="entry name" value="EBNA2 BINDING PROTEIN P100"/>
    <property type="match status" value="1"/>
</dbReference>
<dbReference type="PANTHER" id="PTHR12302:SF3">
    <property type="entry name" value="SERINE_THREONINE-PROTEIN KINASE 31"/>
    <property type="match status" value="1"/>
</dbReference>
<dbReference type="Pfam" id="PF00565">
    <property type="entry name" value="SNase"/>
    <property type="match status" value="1"/>
</dbReference>
<dbReference type="SMART" id="SM00318">
    <property type="entry name" value="SNc"/>
    <property type="match status" value="1"/>
</dbReference>
<dbReference type="SUPFAM" id="SSF50199">
    <property type="entry name" value="Staphylococcal nuclease"/>
    <property type="match status" value="1"/>
</dbReference>
<dbReference type="PROSITE" id="PS51257">
    <property type="entry name" value="PROKAR_LIPOPROTEIN"/>
    <property type="match status" value="1"/>
</dbReference>
<dbReference type="PROSITE" id="PS01284">
    <property type="entry name" value="TNASE_2"/>
    <property type="match status" value="1"/>
</dbReference>
<dbReference type="PROSITE" id="PS50830">
    <property type="entry name" value="TNASE_3"/>
    <property type="match status" value="1"/>
</dbReference>
<evidence type="ECO:0000255" key="1">
    <source>
        <dbReference type="PROSITE-ProRule" id="PRU00272"/>
    </source>
</evidence>
<evidence type="ECO:0000255" key="2">
    <source>
        <dbReference type="PROSITE-ProRule" id="PRU00303"/>
    </source>
</evidence>
<evidence type="ECO:0000256" key="3">
    <source>
        <dbReference type="SAM" id="MobiDB-lite"/>
    </source>
</evidence>
<evidence type="ECO:0000269" key="4">
    <source>
    </source>
</evidence>
<evidence type="ECO:0000269" key="5">
    <source>
    </source>
</evidence>
<gene>
    <name type="primary">yncB</name>
    <name type="ordered locus">BSU17620</name>
</gene>
<comment type="function">
    <text evidence="4">Shows DNase activity on double strand DNA.</text>
</comment>
<comment type="cofactor">
    <cofactor evidence="1">
        <name>Ca(2+)</name>
        <dbReference type="ChEBI" id="CHEBI:29108"/>
    </cofactor>
    <text evidence="1">Binds 1 Ca(2+) ion per subunit.</text>
</comment>
<comment type="activity regulation">
    <text evidence="4">Inhibited by aurintricalboxylic acid but not by Zn(2+).</text>
</comment>
<comment type="subcellular location">
    <subcellularLocation>
        <location evidence="2">Cell membrane</location>
        <topology evidence="2">Lipid-anchor</topology>
    </subcellularLocation>
</comment>
<comment type="disruption phenotype">
    <text evidence="4 5">Non-essential, it can be disrupted (PubMed:12060778). Cells lacking this gene show DNase activity when exposed to thermal stress, as well as increased competence (PubMed:11584000).</text>
</comment>
<comment type="similarity">
    <text evidence="1">Belongs to the thermonuclease family.</text>
</comment>
<organism>
    <name type="scientific">Bacillus subtilis (strain 168)</name>
    <dbReference type="NCBI Taxonomy" id="224308"/>
    <lineage>
        <taxon>Bacteria</taxon>
        <taxon>Bacillati</taxon>
        <taxon>Bacillota</taxon>
        <taxon>Bacilli</taxon>
        <taxon>Bacillales</taxon>
        <taxon>Bacillaceae</taxon>
        <taxon>Bacillus</taxon>
    </lineage>
</organism>
<proteinExistence type="evidence at protein level"/>
<keyword id="KW-0106">Calcium</keyword>
<keyword id="KW-1003">Cell membrane</keyword>
<keyword id="KW-0255">Endonuclease</keyword>
<keyword id="KW-0378">Hydrolase</keyword>
<keyword id="KW-0449">Lipoprotein</keyword>
<keyword id="KW-0472">Membrane</keyword>
<keyword id="KW-0479">Metal-binding</keyword>
<keyword id="KW-0540">Nuclease</keyword>
<keyword id="KW-0564">Palmitate</keyword>
<keyword id="KW-1185">Reference proteome</keyword>
<keyword id="KW-0732">Signal</keyword>
<feature type="signal peptide" evidence="2">
    <location>
        <begin position="1"/>
        <end position="19"/>
    </location>
</feature>
<feature type="chain" id="PRO_0000375917" description="Endonuclease YncB" evidence="2">
    <location>
        <begin position="20"/>
        <end position="211"/>
    </location>
</feature>
<feature type="domain" description="TNase-like" evidence="1">
    <location>
        <begin position="64"/>
        <end position="197"/>
    </location>
</feature>
<feature type="region of interest" description="Disordered" evidence="3">
    <location>
        <begin position="24"/>
        <end position="63"/>
    </location>
</feature>
<feature type="compositionally biased region" description="Polar residues" evidence="3">
    <location>
        <begin position="31"/>
        <end position="53"/>
    </location>
</feature>
<feature type="active site" evidence="1">
    <location>
        <position position="91"/>
    </location>
</feature>
<feature type="active site" evidence="1">
    <location>
        <position position="99"/>
    </location>
</feature>
<feature type="active site" evidence="1">
    <location>
        <position position="142"/>
    </location>
</feature>
<feature type="binding site" evidence="1">
    <location>
        <position position="77"/>
    </location>
    <ligand>
        <name>Ca(2+)</name>
        <dbReference type="ChEBI" id="CHEBI:29108"/>
    </ligand>
</feature>
<feature type="binding site" evidence="1">
    <location>
        <position position="96"/>
    </location>
    <ligand>
        <name>Ca(2+)</name>
        <dbReference type="ChEBI" id="CHEBI:29108"/>
    </ligand>
</feature>
<feature type="binding site" evidence="1">
    <location>
        <position position="97"/>
    </location>
    <ligand>
        <name>Ca(2+)</name>
        <dbReference type="ChEBI" id="CHEBI:29108"/>
    </ligand>
</feature>
<feature type="lipid moiety-binding region" description="N-palmitoyl cysteine" evidence="2">
    <location>
        <position position="20"/>
    </location>
</feature>
<feature type="lipid moiety-binding region" description="S-diacylglycerol cysteine" evidence="2">
    <location>
        <position position="20"/>
    </location>
</feature>
<accession>P94492</accession>
<accession>Q796H2</accession>